<organism>
    <name type="scientific">Rickettsia massiliae (strain Mtu5)</name>
    <dbReference type="NCBI Taxonomy" id="416276"/>
    <lineage>
        <taxon>Bacteria</taxon>
        <taxon>Pseudomonadati</taxon>
        <taxon>Pseudomonadota</taxon>
        <taxon>Alphaproteobacteria</taxon>
        <taxon>Rickettsiales</taxon>
        <taxon>Rickettsiaceae</taxon>
        <taxon>Rickettsieae</taxon>
        <taxon>Rickettsia</taxon>
        <taxon>spotted fever group</taxon>
    </lineage>
</organism>
<evidence type="ECO:0000250" key="1"/>
<evidence type="ECO:0000255" key="2">
    <source>
        <dbReference type="HAMAP-Rule" id="MF_00103"/>
    </source>
</evidence>
<comment type="function">
    <text evidence="2">Involved in base excision repair of DNA damaged by oxidation or by mutagenic agents. Acts as a DNA glycosylase that recognizes and removes damaged bases. Has a preference for oxidized purines, such as 7,8-dihydro-8-oxoguanine (8-oxoG). Has AP (apurinic/apyrimidinic) lyase activity and introduces nicks in the DNA strand. Cleaves the DNA backbone by beta-delta elimination to generate a single-strand break at the site of the removed base with both 3'- and 5'-phosphates.</text>
</comment>
<comment type="catalytic activity">
    <reaction evidence="2">
        <text>Hydrolysis of DNA containing ring-opened 7-methylguanine residues, releasing 2,6-diamino-4-hydroxy-5-(N-methyl)formamidopyrimidine.</text>
        <dbReference type="EC" id="3.2.2.23"/>
    </reaction>
</comment>
<comment type="catalytic activity">
    <reaction evidence="2">
        <text>2'-deoxyribonucleotide-(2'-deoxyribose 5'-phosphate)-2'-deoxyribonucleotide-DNA = a 3'-end 2'-deoxyribonucleotide-(2,3-dehydro-2,3-deoxyribose 5'-phosphate)-DNA + a 5'-end 5'-phospho-2'-deoxyribonucleoside-DNA + H(+)</text>
        <dbReference type="Rhea" id="RHEA:66592"/>
        <dbReference type="Rhea" id="RHEA-COMP:13180"/>
        <dbReference type="Rhea" id="RHEA-COMP:16897"/>
        <dbReference type="Rhea" id="RHEA-COMP:17067"/>
        <dbReference type="ChEBI" id="CHEBI:15378"/>
        <dbReference type="ChEBI" id="CHEBI:136412"/>
        <dbReference type="ChEBI" id="CHEBI:157695"/>
        <dbReference type="ChEBI" id="CHEBI:167181"/>
        <dbReference type="EC" id="4.2.99.18"/>
    </reaction>
</comment>
<comment type="cofactor">
    <cofactor evidence="2">
        <name>Zn(2+)</name>
        <dbReference type="ChEBI" id="CHEBI:29105"/>
    </cofactor>
    <text evidence="2">Binds 1 zinc ion per subunit.</text>
</comment>
<comment type="subunit">
    <text evidence="2">Monomer.</text>
</comment>
<comment type="similarity">
    <text evidence="2">Belongs to the FPG family.</text>
</comment>
<gene>
    <name evidence="2" type="primary">mutM</name>
    <name evidence="2" type="synonym">fpg</name>
    <name type="ordered locus">RMA_1070</name>
</gene>
<reference key="1">
    <citation type="journal article" date="2007" name="Genome Res.">
        <title>Lateral gene transfer between obligate intracellular bacteria: evidence from the Rickettsia massiliae genome.</title>
        <authorList>
            <person name="Blanc G."/>
            <person name="Ogata H."/>
            <person name="Robert C."/>
            <person name="Audic S."/>
            <person name="Claverie J.-M."/>
            <person name="Raoult D."/>
        </authorList>
    </citation>
    <scope>NUCLEOTIDE SEQUENCE [LARGE SCALE GENOMIC DNA]</scope>
    <source>
        <strain>Mtu5</strain>
    </source>
</reference>
<dbReference type="EC" id="3.2.2.23" evidence="2"/>
<dbReference type="EC" id="4.2.99.18" evidence="2"/>
<dbReference type="EMBL" id="CP000683">
    <property type="protein sequence ID" value="ABV85106.1"/>
    <property type="molecule type" value="Genomic_DNA"/>
</dbReference>
<dbReference type="RefSeq" id="WP_012153072.1">
    <property type="nucleotide sequence ID" value="NC_009900.1"/>
</dbReference>
<dbReference type="SMR" id="A8F2H0"/>
<dbReference type="KEGG" id="rms:RMA_1070"/>
<dbReference type="HOGENOM" id="CLU_038423_1_1_5"/>
<dbReference type="Proteomes" id="UP000001311">
    <property type="component" value="Chromosome"/>
</dbReference>
<dbReference type="GO" id="GO:0034039">
    <property type="term" value="F:8-oxo-7,8-dihydroguanine DNA N-glycosylase activity"/>
    <property type="evidence" value="ECO:0007669"/>
    <property type="project" value="TreeGrafter"/>
</dbReference>
<dbReference type="GO" id="GO:0140078">
    <property type="term" value="F:class I DNA-(apurinic or apyrimidinic site) endonuclease activity"/>
    <property type="evidence" value="ECO:0007669"/>
    <property type="project" value="UniProtKB-EC"/>
</dbReference>
<dbReference type="GO" id="GO:0003684">
    <property type="term" value="F:damaged DNA binding"/>
    <property type="evidence" value="ECO:0007669"/>
    <property type="project" value="InterPro"/>
</dbReference>
<dbReference type="GO" id="GO:0008270">
    <property type="term" value="F:zinc ion binding"/>
    <property type="evidence" value="ECO:0007669"/>
    <property type="project" value="UniProtKB-UniRule"/>
</dbReference>
<dbReference type="GO" id="GO:0006284">
    <property type="term" value="P:base-excision repair"/>
    <property type="evidence" value="ECO:0007669"/>
    <property type="project" value="InterPro"/>
</dbReference>
<dbReference type="CDD" id="cd08966">
    <property type="entry name" value="EcFpg-like_N"/>
    <property type="match status" value="1"/>
</dbReference>
<dbReference type="FunFam" id="1.10.8.50:FF:000003">
    <property type="entry name" value="Formamidopyrimidine-DNA glycosylase"/>
    <property type="match status" value="1"/>
</dbReference>
<dbReference type="Gene3D" id="1.10.8.50">
    <property type="match status" value="1"/>
</dbReference>
<dbReference type="Gene3D" id="3.20.190.10">
    <property type="entry name" value="MutM-like, N-terminal"/>
    <property type="match status" value="1"/>
</dbReference>
<dbReference type="HAMAP" id="MF_00103">
    <property type="entry name" value="Fapy_DNA_glycosyl"/>
    <property type="match status" value="1"/>
</dbReference>
<dbReference type="InterPro" id="IPR015886">
    <property type="entry name" value="DNA_glyclase/AP_lyase_DNA-bd"/>
</dbReference>
<dbReference type="InterPro" id="IPR015887">
    <property type="entry name" value="DNA_glyclase_Znf_dom_DNA_BS"/>
</dbReference>
<dbReference type="InterPro" id="IPR020629">
    <property type="entry name" value="Formamido-pyr_DNA_Glyclase"/>
</dbReference>
<dbReference type="InterPro" id="IPR012319">
    <property type="entry name" value="FPG_cat"/>
</dbReference>
<dbReference type="InterPro" id="IPR035937">
    <property type="entry name" value="MutM-like_N-ter"/>
</dbReference>
<dbReference type="InterPro" id="IPR010979">
    <property type="entry name" value="Ribosomal_uS13-like_H2TH"/>
</dbReference>
<dbReference type="InterPro" id="IPR000214">
    <property type="entry name" value="Znf_DNA_glyclase/AP_lyase"/>
</dbReference>
<dbReference type="InterPro" id="IPR010663">
    <property type="entry name" value="Znf_FPG/IleRS"/>
</dbReference>
<dbReference type="NCBIfam" id="TIGR00577">
    <property type="entry name" value="fpg"/>
    <property type="match status" value="1"/>
</dbReference>
<dbReference type="NCBIfam" id="NF002211">
    <property type="entry name" value="PRK01103.1"/>
    <property type="match status" value="1"/>
</dbReference>
<dbReference type="PANTHER" id="PTHR22993">
    <property type="entry name" value="FORMAMIDOPYRIMIDINE-DNA GLYCOSYLASE"/>
    <property type="match status" value="1"/>
</dbReference>
<dbReference type="PANTHER" id="PTHR22993:SF9">
    <property type="entry name" value="FORMAMIDOPYRIMIDINE-DNA GLYCOSYLASE"/>
    <property type="match status" value="1"/>
</dbReference>
<dbReference type="Pfam" id="PF01149">
    <property type="entry name" value="Fapy_DNA_glyco"/>
    <property type="match status" value="1"/>
</dbReference>
<dbReference type="Pfam" id="PF06831">
    <property type="entry name" value="H2TH"/>
    <property type="match status" value="1"/>
</dbReference>
<dbReference type="Pfam" id="PF06827">
    <property type="entry name" value="zf-FPG_IleRS"/>
    <property type="match status" value="1"/>
</dbReference>
<dbReference type="SMART" id="SM00898">
    <property type="entry name" value="Fapy_DNA_glyco"/>
    <property type="match status" value="1"/>
</dbReference>
<dbReference type="SMART" id="SM01232">
    <property type="entry name" value="H2TH"/>
    <property type="match status" value="1"/>
</dbReference>
<dbReference type="SUPFAM" id="SSF57716">
    <property type="entry name" value="Glucocorticoid receptor-like (DNA-binding domain)"/>
    <property type="match status" value="1"/>
</dbReference>
<dbReference type="SUPFAM" id="SSF81624">
    <property type="entry name" value="N-terminal domain of MutM-like DNA repair proteins"/>
    <property type="match status" value="1"/>
</dbReference>
<dbReference type="SUPFAM" id="SSF46946">
    <property type="entry name" value="S13-like H2TH domain"/>
    <property type="match status" value="1"/>
</dbReference>
<dbReference type="PROSITE" id="PS51068">
    <property type="entry name" value="FPG_CAT"/>
    <property type="match status" value="1"/>
</dbReference>
<dbReference type="PROSITE" id="PS01242">
    <property type="entry name" value="ZF_FPG_1"/>
    <property type="match status" value="1"/>
</dbReference>
<dbReference type="PROSITE" id="PS51066">
    <property type="entry name" value="ZF_FPG_2"/>
    <property type="match status" value="1"/>
</dbReference>
<proteinExistence type="inferred from homology"/>
<accession>A8F2H0</accession>
<keyword id="KW-0227">DNA damage</keyword>
<keyword id="KW-0234">DNA repair</keyword>
<keyword id="KW-0238">DNA-binding</keyword>
<keyword id="KW-0326">Glycosidase</keyword>
<keyword id="KW-0378">Hydrolase</keyword>
<keyword id="KW-0456">Lyase</keyword>
<keyword id="KW-0479">Metal-binding</keyword>
<keyword id="KW-0511">Multifunctional enzyme</keyword>
<keyword id="KW-0862">Zinc</keyword>
<keyword id="KW-0863">Zinc-finger</keyword>
<feature type="initiator methionine" description="Removed" evidence="1">
    <location>
        <position position="1"/>
    </location>
</feature>
<feature type="chain" id="PRO_1000057695" description="Formamidopyrimidine-DNA glycosylase">
    <location>
        <begin position="2"/>
        <end position="279"/>
    </location>
</feature>
<feature type="zinc finger region" description="FPG-type" evidence="2">
    <location>
        <begin position="238"/>
        <end position="272"/>
    </location>
</feature>
<feature type="active site" description="Schiff-base intermediate with DNA" evidence="2">
    <location>
        <position position="2"/>
    </location>
</feature>
<feature type="active site" description="Proton donor" evidence="2">
    <location>
        <position position="3"/>
    </location>
</feature>
<feature type="active site" description="Proton donor; for beta-elimination activity" evidence="2">
    <location>
        <position position="58"/>
    </location>
</feature>
<feature type="active site" description="Proton donor; for delta-elimination activity" evidence="2">
    <location>
        <position position="262"/>
    </location>
</feature>
<feature type="binding site" evidence="2">
    <location>
        <position position="92"/>
    </location>
    <ligand>
        <name>DNA</name>
        <dbReference type="ChEBI" id="CHEBI:16991"/>
    </ligand>
</feature>
<feature type="binding site" evidence="2">
    <location>
        <position position="111"/>
    </location>
    <ligand>
        <name>DNA</name>
        <dbReference type="ChEBI" id="CHEBI:16991"/>
    </ligand>
</feature>
<feature type="binding site" evidence="2">
    <location>
        <position position="153"/>
    </location>
    <ligand>
        <name>DNA</name>
        <dbReference type="ChEBI" id="CHEBI:16991"/>
    </ligand>
</feature>
<name>FPG_RICM5</name>
<protein>
    <recommendedName>
        <fullName evidence="2">Formamidopyrimidine-DNA glycosylase</fullName>
        <shortName evidence="2">Fapy-DNA glycosylase</shortName>
        <ecNumber evidence="2">3.2.2.23</ecNumber>
    </recommendedName>
    <alternativeName>
        <fullName evidence="2">DNA-(apurinic or apyrimidinic site) lyase MutM</fullName>
        <shortName evidence="2">AP lyase MutM</shortName>
        <ecNumber evidence="2">4.2.99.18</ecNumber>
    </alternativeName>
</protein>
<sequence>MPELPEVETLKNSLKDKLIGLIVENVELKRDNLRYKLSPLLATEILNTNILDVRRRAKYLIIDFNNDYSLIVHLGMSGRFTLQSANYKTQKHDHVIFDLSNGEKLIFNDTRRFGMIYSFKTDLLEQEFFNDLGIEPFSDLLTLEYLKDKLQTRKRPIKNLIMDNRVIVGVGNIYASESLHLARIHPDKSGSDLRDDEIENLIKSIRDVLTKAITAGGTTLKDFVNGDNKPGYFTQQLTVYGKEGQSCLSCSSTIIKTKHSGRSTFYCKTCQYRLASFTI</sequence>